<proteinExistence type="inferred from homology"/>
<keyword id="KW-0963">Cytoplasm</keyword>
<keyword id="KW-0378">Hydrolase</keyword>
<keyword id="KW-0520">NAD</keyword>
<keyword id="KW-0554">One-carbon metabolism</keyword>
<keyword id="KW-1185">Reference proteome</keyword>
<comment type="function">
    <text evidence="1">May play a key role in the regulation of the intracellular concentration of adenosylhomocysteine.</text>
</comment>
<comment type="catalytic activity">
    <reaction evidence="1">
        <text>S-adenosyl-L-homocysteine + H2O = L-homocysteine + adenosine</text>
        <dbReference type="Rhea" id="RHEA:21708"/>
        <dbReference type="ChEBI" id="CHEBI:15377"/>
        <dbReference type="ChEBI" id="CHEBI:16335"/>
        <dbReference type="ChEBI" id="CHEBI:57856"/>
        <dbReference type="ChEBI" id="CHEBI:58199"/>
        <dbReference type="EC" id="3.13.2.1"/>
    </reaction>
</comment>
<comment type="cofactor">
    <cofactor evidence="1">
        <name>NAD(+)</name>
        <dbReference type="ChEBI" id="CHEBI:57540"/>
    </cofactor>
    <text evidence="1">Binds 1 NAD(+) per subunit.</text>
</comment>
<comment type="pathway">
    <text evidence="1">Amino-acid biosynthesis; L-homocysteine biosynthesis; L-homocysteine from S-adenosyl-L-homocysteine: step 1/1.</text>
</comment>
<comment type="subcellular location">
    <subcellularLocation>
        <location evidence="1">Cytoplasm</location>
    </subcellularLocation>
</comment>
<comment type="similarity">
    <text evidence="1">Belongs to the adenosylhomocysteinase family.</text>
</comment>
<sequence>MNAVTDKSVADYIVADMALAGWGRRELAIAETEMPGLMAIRDEYAASQPLKGARIAGSLHMTIQTGVLIETLVALGAEVRWASCNIFSTQDHAAAAIAATGTPVFAIKGETLEEYWQYTHKIFEWPEGRHANMILDDGGDATLLLHLGARAEQDISVLAKPGSEEERVLFAAIKETLGRDPKWYSTRLAQIKGVTEETTTGVHRLYQMSQKGELAFAAINVNDSVTKSKFDNLYGCRESLVDGIKRATDVMVAGKIAVVAGYGDVGKGCAQALVALRAQVWVTEIDPICALQAAMEGFKVVTMEEAAAHADIFVTATGNYHVITRQHMEAMKDQAIVCNIGHFDNEIDVAGLENCQWEEIKPQVDHVIFPDGKRIILLAKGRLVNLGCATGHPSFVMSSSFANQTIAQIELFTRNEAYTTGQVYVLPKHLDEKVARLHLKKLGVKLSTLSKQQADYIGVPVEGPFKPDHYRY</sequence>
<evidence type="ECO:0000255" key="1">
    <source>
        <dbReference type="HAMAP-Rule" id="MF_00563"/>
    </source>
</evidence>
<name>SAHH_BORPE</name>
<protein>
    <recommendedName>
        <fullName evidence="1">Adenosylhomocysteinase</fullName>
        <ecNumber evidence="1">3.13.2.1</ecNumber>
    </recommendedName>
    <alternativeName>
        <fullName evidence="1">S-adenosyl-L-homocysteine hydrolase</fullName>
        <shortName evidence="1">AdoHcyase</shortName>
    </alternativeName>
</protein>
<dbReference type="EC" id="3.13.2.1" evidence="1"/>
<dbReference type="EMBL" id="BX640420">
    <property type="protein sequence ID" value="CAE43337.1"/>
    <property type="molecule type" value="Genomic_DNA"/>
</dbReference>
<dbReference type="RefSeq" id="NP_881639.1">
    <property type="nucleotide sequence ID" value="NC_002929.2"/>
</dbReference>
<dbReference type="RefSeq" id="WP_010931278.1">
    <property type="nucleotide sequence ID" value="NZ_CP039022.1"/>
</dbReference>
<dbReference type="SMR" id="Q7VUL8"/>
<dbReference type="STRING" id="257313.BP3068"/>
<dbReference type="PaxDb" id="257313-BP3068"/>
<dbReference type="GeneID" id="69603006"/>
<dbReference type="KEGG" id="bpe:BP3068"/>
<dbReference type="PATRIC" id="fig|257313.5.peg.3316"/>
<dbReference type="eggNOG" id="COG0499">
    <property type="taxonomic scope" value="Bacteria"/>
</dbReference>
<dbReference type="HOGENOM" id="CLU_025194_2_1_4"/>
<dbReference type="UniPathway" id="UPA00314">
    <property type="reaction ID" value="UER00076"/>
</dbReference>
<dbReference type="Proteomes" id="UP000002676">
    <property type="component" value="Chromosome"/>
</dbReference>
<dbReference type="GO" id="GO:0005829">
    <property type="term" value="C:cytosol"/>
    <property type="evidence" value="ECO:0007669"/>
    <property type="project" value="TreeGrafter"/>
</dbReference>
<dbReference type="GO" id="GO:0004013">
    <property type="term" value="F:adenosylhomocysteinase activity"/>
    <property type="evidence" value="ECO:0007669"/>
    <property type="project" value="UniProtKB-UniRule"/>
</dbReference>
<dbReference type="GO" id="GO:0071269">
    <property type="term" value="P:L-homocysteine biosynthetic process"/>
    <property type="evidence" value="ECO:0007669"/>
    <property type="project" value="UniProtKB-UniRule"/>
</dbReference>
<dbReference type="GO" id="GO:0006730">
    <property type="term" value="P:one-carbon metabolic process"/>
    <property type="evidence" value="ECO:0007669"/>
    <property type="project" value="UniProtKB-KW"/>
</dbReference>
<dbReference type="GO" id="GO:0033353">
    <property type="term" value="P:S-adenosylmethionine cycle"/>
    <property type="evidence" value="ECO:0007669"/>
    <property type="project" value="TreeGrafter"/>
</dbReference>
<dbReference type="CDD" id="cd00401">
    <property type="entry name" value="SAHH"/>
    <property type="match status" value="1"/>
</dbReference>
<dbReference type="FunFam" id="3.40.50.720:FF:000004">
    <property type="entry name" value="Adenosylhomocysteinase"/>
    <property type="match status" value="1"/>
</dbReference>
<dbReference type="Gene3D" id="3.40.50.1480">
    <property type="entry name" value="Adenosylhomocysteinase-like"/>
    <property type="match status" value="1"/>
</dbReference>
<dbReference type="Gene3D" id="3.40.50.720">
    <property type="entry name" value="NAD(P)-binding Rossmann-like Domain"/>
    <property type="match status" value="1"/>
</dbReference>
<dbReference type="HAMAP" id="MF_00563">
    <property type="entry name" value="AdoHcyase"/>
    <property type="match status" value="1"/>
</dbReference>
<dbReference type="InterPro" id="IPR042172">
    <property type="entry name" value="Adenosylhomocyst_ase-like_sf"/>
</dbReference>
<dbReference type="InterPro" id="IPR000043">
    <property type="entry name" value="Adenosylhomocysteinase-like"/>
</dbReference>
<dbReference type="InterPro" id="IPR015878">
    <property type="entry name" value="Ado_hCys_hydrolase_NAD-bd"/>
</dbReference>
<dbReference type="InterPro" id="IPR036291">
    <property type="entry name" value="NAD(P)-bd_dom_sf"/>
</dbReference>
<dbReference type="InterPro" id="IPR020082">
    <property type="entry name" value="S-Ado-L-homoCys_hydrolase_CS"/>
</dbReference>
<dbReference type="NCBIfam" id="TIGR00936">
    <property type="entry name" value="ahcY"/>
    <property type="match status" value="1"/>
</dbReference>
<dbReference type="NCBIfam" id="NF004005">
    <property type="entry name" value="PRK05476.2-3"/>
    <property type="match status" value="1"/>
</dbReference>
<dbReference type="PANTHER" id="PTHR23420">
    <property type="entry name" value="ADENOSYLHOMOCYSTEINASE"/>
    <property type="match status" value="1"/>
</dbReference>
<dbReference type="PANTHER" id="PTHR23420:SF0">
    <property type="entry name" value="ADENOSYLHOMOCYSTEINASE"/>
    <property type="match status" value="1"/>
</dbReference>
<dbReference type="Pfam" id="PF05221">
    <property type="entry name" value="AdoHcyase"/>
    <property type="match status" value="1"/>
</dbReference>
<dbReference type="Pfam" id="PF00670">
    <property type="entry name" value="AdoHcyase_NAD"/>
    <property type="match status" value="1"/>
</dbReference>
<dbReference type="PIRSF" id="PIRSF001109">
    <property type="entry name" value="Ad_hcy_hydrolase"/>
    <property type="match status" value="1"/>
</dbReference>
<dbReference type="SMART" id="SM00996">
    <property type="entry name" value="AdoHcyase"/>
    <property type="match status" value="1"/>
</dbReference>
<dbReference type="SMART" id="SM00997">
    <property type="entry name" value="AdoHcyase_NAD"/>
    <property type="match status" value="1"/>
</dbReference>
<dbReference type="SUPFAM" id="SSF52283">
    <property type="entry name" value="Formate/glycerate dehydrogenase catalytic domain-like"/>
    <property type="match status" value="1"/>
</dbReference>
<dbReference type="SUPFAM" id="SSF51735">
    <property type="entry name" value="NAD(P)-binding Rossmann-fold domains"/>
    <property type="match status" value="1"/>
</dbReference>
<dbReference type="PROSITE" id="PS00738">
    <property type="entry name" value="ADOHCYASE_1"/>
    <property type="match status" value="1"/>
</dbReference>
<dbReference type="PROSITE" id="PS00739">
    <property type="entry name" value="ADOHCYASE_2"/>
    <property type="match status" value="1"/>
</dbReference>
<gene>
    <name evidence="1" type="primary">ahcY</name>
    <name type="synonym">acyH</name>
    <name type="ordered locus">BP3068</name>
</gene>
<accession>Q7VUL8</accession>
<organism>
    <name type="scientific">Bordetella pertussis (strain Tohama I / ATCC BAA-589 / NCTC 13251)</name>
    <dbReference type="NCBI Taxonomy" id="257313"/>
    <lineage>
        <taxon>Bacteria</taxon>
        <taxon>Pseudomonadati</taxon>
        <taxon>Pseudomonadota</taxon>
        <taxon>Betaproteobacteria</taxon>
        <taxon>Burkholderiales</taxon>
        <taxon>Alcaligenaceae</taxon>
        <taxon>Bordetella</taxon>
    </lineage>
</organism>
<feature type="chain" id="PRO_0000116949" description="Adenosylhomocysteinase">
    <location>
        <begin position="1"/>
        <end position="472"/>
    </location>
</feature>
<feature type="binding site" evidence="1">
    <location>
        <position position="62"/>
    </location>
    <ligand>
        <name>substrate</name>
    </ligand>
</feature>
<feature type="binding site" evidence="1">
    <location>
        <position position="137"/>
    </location>
    <ligand>
        <name>substrate</name>
    </ligand>
</feature>
<feature type="binding site" evidence="1">
    <location>
        <position position="197"/>
    </location>
    <ligand>
        <name>substrate</name>
    </ligand>
</feature>
<feature type="binding site" evidence="1">
    <location>
        <begin position="198"/>
        <end position="200"/>
    </location>
    <ligand>
        <name>NAD(+)</name>
        <dbReference type="ChEBI" id="CHEBI:57540"/>
    </ligand>
</feature>
<feature type="binding site" evidence="1">
    <location>
        <position position="227"/>
    </location>
    <ligand>
        <name>substrate</name>
    </ligand>
</feature>
<feature type="binding site" evidence="1">
    <location>
        <position position="231"/>
    </location>
    <ligand>
        <name>substrate</name>
    </ligand>
</feature>
<feature type="binding site" evidence="1">
    <location>
        <position position="232"/>
    </location>
    <ligand>
        <name>NAD(+)</name>
        <dbReference type="ChEBI" id="CHEBI:57540"/>
    </ligand>
</feature>
<feature type="binding site" evidence="1">
    <location>
        <begin position="261"/>
        <end position="266"/>
    </location>
    <ligand>
        <name>NAD(+)</name>
        <dbReference type="ChEBI" id="CHEBI:57540"/>
    </ligand>
</feature>
<feature type="binding site" evidence="1">
    <location>
        <position position="284"/>
    </location>
    <ligand>
        <name>NAD(+)</name>
        <dbReference type="ChEBI" id="CHEBI:57540"/>
    </ligand>
</feature>
<feature type="binding site" evidence="1">
    <location>
        <position position="319"/>
    </location>
    <ligand>
        <name>NAD(+)</name>
        <dbReference type="ChEBI" id="CHEBI:57540"/>
    </ligand>
</feature>
<feature type="binding site" evidence="1">
    <location>
        <begin position="340"/>
        <end position="342"/>
    </location>
    <ligand>
        <name>NAD(+)</name>
        <dbReference type="ChEBI" id="CHEBI:57540"/>
    </ligand>
</feature>
<feature type="binding site" evidence="1">
    <location>
        <position position="385"/>
    </location>
    <ligand>
        <name>NAD(+)</name>
        <dbReference type="ChEBI" id="CHEBI:57540"/>
    </ligand>
</feature>
<reference key="1">
    <citation type="journal article" date="2003" name="Nat. Genet.">
        <title>Comparative analysis of the genome sequences of Bordetella pertussis, Bordetella parapertussis and Bordetella bronchiseptica.</title>
        <authorList>
            <person name="Parkhill J."/>
            <person name="Sebaihia M."/>
            <person name="Preston A."/>
            <person name="Murphy L.D."/>
            <person name="Thomson N.R."/>
            <person name="Harris D.E."/>
            <person name="Holden M.T.G."/>
            <person name="Churcher C.M."/>
            <person name="Bentley S.D."/>
            <person name="Mungall K.L."/>
            <person name="Cerdeno-Tarraga A.-M."/>
            <person name="Temple L."/>
            <person name="James K.D."/>
            <person name="Harris B."/>
            <person name="Quail M.A."/>
            <person name="Achtman M."/>
            <person name="Atkin R."/>
            <person name="Baker S."/>
            <person name="Basham D."/>
            <person name="Bason N."/>
            <person name="Cherevach I."/>
            <person name="Chillingworth T."/>
            <person name="Collins M."/>
            <person name="Cronin A."/>
            <person name="Davis P."/>
            <person name="Doggett J."/>
            <person name="Feltwell T."/>
            <person name="Goble A."/>
            <person name="Hamlin N."/>
            <person name="Hauser H."/>
            <person name="Holroyd S."/>
            <person name="Jagels K."/>
            <person name="Leather S."/>
            <person name="Moule S."/>
            <person name="Norberczak H."/>
            <person name="O'Neil S."/>
            <person name="Ormond D."/>
            <person name="Price C."/>
            <person name="Rabbinowitsch E."/>
            <person name="Rutter S."/>
            <person name="Sanders M."/>
            <person name="Saunders D."/>
            <person name="Seeger K."/>
            <person name="Sharp S."/>
            <person name="Simmonds M."/>
            <person name="Skelton J."/>
            <person name="Squares R."/>
            <person name="Squares S."/>
            <person name="Stevens K."/>
            <person name="Unwin L."/>
            <person name="Whitehead S."/>
            <person name="Barrell B.G."/>
            <person name="Maskell D.J."/>
        </authorList>
    </citation>
    <scope>NUCLEOTIDE SEQUENCE [LARGE SCALE GENOMIC DNA]</scope>
    <source>
        <strain>Tohama I / ATCC BAA-589 / NCTC 13251</strain>
    </source>
</reference>